<sequence>MGTRSVALVLLAAVLLQALLPASAAEGLVRIALKKRPIDENSRVAARLSGEEGARRLGLRGANSLGGGGGEGDIVALKNYMNAQYFGEIGVGTPPQKFTVIFDTGSSNLWVPSAKCYFSIACFFHSRYKSGQSSTYQKNGKPAAIQYGTGSIAGFFSEDSVTVGDLVVKDQEFIEATKEPGLTFMVAKFDGILGLGFQEISVGDAVPVWYKMVEQGLVSEPVFSFWFNRHSDEGEGGEIVFGGMDPSHYKGNHTYVPVSQKGYWQFEMGDVLIGGKTTGFCASGCSAIADSGTSLLAGPTAIITEINEKIGATGVVSQECKTVVSQYGQQILDLLLAETQPSKICSQVGLCTFDGKHGVSAGIKSVVDDEAGESNGLQSGPMCNACEMAVVWMQNQLAQNKTQDLILNYINQLCDKLPSPMGESSVDCGSLASMPEISFTIGGKKFALKPEEYILKVGEGAAAQCISGFTAMDIPPPRGPLWILGDVFMGAYHTVFDYGKMRVGFAKSA</sequence>
<protein>
    <recommendedName>
        <fullName>Aspartic proteinase oryzasin-1</fullName>
        <ecNumber>3.4.23.-</ecNumber>
    </recommendedName>
</protein>
<comment type="function">
    <text evidence="1">Involved in the breakdown of propeptides of storage proteins in protein-storage vacuoles.</text>
</comment>
<comment type="subcellular location">
    <subcellularLocation>
        <location evidence="1">Vacuole</location>
    </subcellularLocation>
</comment>
<comment type="developmental stage">
    <text>Seed ripening and germination.</text>
</comment>
<comment type="similarity">
    <text evidence="6">Belongs to the peptidase A1 family.</text>
</comment>
<name>ASPR1_ORYSJ</name>
<dbReference type="EC" id="3.4.23.-"/>
<dbReference type="EMBL" id="D32144">
    <property type="protein sequence ID" value="BAA06875.1"/>
    <property type="molecule type" value="mRNA"/>
</dbReference>
<dbReference type="EMBL" id="D32165">
    <property type="protein sequence ID" value="BAA06876.1"/>
    <property type="molecule type" value="Genomic_DNA"/>
</dbReference>
<dbReference type="EMBL" id="AC120986">
    <property type="protein sequence ID" value="AAU10663.1"/>
    <property type="molecule type" value="Genomic_DNA"/>
</dbReference>
<dbReference type="EMBL" id="AP014961">
    <property type="protein sequence ID" value="BAS95382.1"/>
    <property type="molecule type" value="Genomic_DNA"/>
</dbReference>
<dbReference type="PIR" id="S66516">
    <property type="entry name" value="S66516"/>
</dbReference>
<dbReference type="RefSeq" id="XP_015639571.1">
    <property type="nucleotide sequence ID" value="XM_015784085.1"/>
</dbReference>
<dbReference type="SMR" id="Q42456"/>
<dbReference type="FunCoup" id="Q42456">
    <property type="interactions" value="1550"/>
</dbReference>
<dbReference type="STRING" id="39947.Q42456"/>
<dbReference type="MEROPS" id="A01.020"/>
<dbReference type="PaxDb" id="39947-Q42456"/>
<dbReference type="EnsemblPlants" id="Os05t0567100-01">
    <property type="protein sequence ID" value="Os05t0567100-01"/>
    <property type="gene ID" value="Os05g0567100"/>
</dbReference>
<dbReference type="EnsemblPlants" id="Os05t0567100-02">
    <property type="protein sequence ID" value="Os05t0567100-02"/>
    <property type="gene ID" value="Os05g0567100"/>
</dbReference>
<dbReference type="Gramene" id="Os05t0567100-01">
    <property type="protein sequence ID" value="Os05t0567100-01"/>
    <property type="gene ID" value="Os05g0567100"/>
</dbReference>
<dbReference type="Gramene" id="Os05t0567100-02">
    <property type="protein sequence ID" value="Os05t0567100-02"/>
    <property type="gene ID" value="Os05g0567100"/>
</dbReference>
<dbReference type="eggNOG" id="KOG1339">
    <property type="taxonomic scope" value="Eukaryota"/>
</dbReference>
<dbReference type="InParanoid" id="Q42456"/>
<dbReference type="OMA" id="KGEYMIS"/>
<dbReference type="OrthoDB" id="771136at2759"/>
<dbReference type="Proteomes" id="UP000000763">
    <property type="component" value="Chromosome 5"/>
</dbReference>
<dbReference type="Proteomes" id="UP000059680">
    <property type="component" value="Chromosome 5"/>
</dbReference>
<dbReference type="ExpressionAtlas" id="Q42456">
    <property type="expression patterns" value="baseline and differential"/>
</dbReference>
<dbReference type="GO" id="GO:0005773">
    <property type="term" value="C:vacuole"/>
    <property type="evidence" value="ECO:0007669"/>
    <property type="project" value="UniProtKB-SubCell"/>
</dbReference>
<dbReference type="GO" id="GO:0004190">
    <property type="term" value="F:aspartic-type endopeptidase activity"/>
    <property type="evidence" value="ECO:0000318"/>
    <property type="project" value="GO_Central"/>
</dbReference>
<dbReference type="GO" id="GO:0006629">
    <property type="term" value="P:lipid metabolic process"/>
    <property type="evidence" value="ECO:0007669"/>
    <property type="project" value="InterPro"/>
</dbReference>
<dbReference type="GO" id="GO:0006508">
    <property type="term" value="P:proteolysis"/>
    <property type="evidence" value="ECO:0000318"/>
    <property type="project" value="GO_Central"/>
</dbReference>
<dbReference type="CDD" id="cd06098">
    <property type="entry name" value="phytepsin"/>
    <property type="match status" value="1"/>
</dbReference>
<dbReference type="FunFam" id="1.10.225.10:FF:000001">
    <property type="entry name" value="Aspartic proteinase A1"/>
    <property type="match status" value="1"/>
</dbReference>
<dbReference type="FunFam" id="2.40.70.10:FF:000115">
    <property type="entry name" value="Lysosomal aspartic protease"/>
    <property type="match status" value="1"/>
</dbReference>
<dbReference type="FunFam" id="2.40.70.10:FF:000002">
    <property type="entry name" value="Vacuolar aspartic proteinase"/>
    <property type="match status" value="1"/>
</dbReference>
<dbReference type="Gene3D" id="2.40.70.10">
    <property type="entry name" value="Acid Proteases"/>
    <property type="match status" value="2"/>
</dbReference>
<dbReference type="Gene3D" id="1.10.225.10">
    <property type="entry name" value="Saposin-like"/>
    <property type="match status" value="1"/>
</dbReference>
<dbReference type="InterPro" id="IPR001461">
    <property type="entry name" value="Aspartic_peptidase_A1"/>
</dbReference>
<dbReference type="InterPro" id="IPR001969">
    <property type="entry name" value="Aspartic_peptidase_AS"/>
</dbReference>
<dbReference type="InterPro" id="IPR033121">
    <property type="entry name" value="PEPTIDASE_A1"/>
</dbReference>
<dbReference type="InterPro" id="IPR021109">
    <property type="entry name" value="Peptidase_aspartic_dom_sf"/>
</dbReference>
<dbReference type="InterPro" id="IPR033869">
    <property type="entry name" value="Phytepsin"/>
</dbReference>
<dbReference type="InterPro" id="IPR007856">
    <property type="entry name" value="SapB_1"/>
</dbReference>
<dbReference type="InterPro" id="IPR008138">
    <property type="entry name" value="SapB_2"/>
</dbReference>
<dbReference type="InterPro" id="IPR011001">
    <property type="entry name" value="Saposin-like"/>
</dbReference>
<dbReference type="InterPro" id="IPR008139">
    <property type="entry name" value="SaposinB_dom"/>
</dbReference>
<dbReference type="PANTHER" id="PTHR47966:SF76">
    <property type="entry name" value="ASPARTIC PROTEINASE A1"/>
    <property type="match status" value="1"/>
</dbReference>
<dbReference type="PANTHER" id="PTHR47966">
    <property type="entry name" value="BETA-SITE APP-CLEAVING ENZYME, ISOFORM A-RELATED"/>
    <property type="match status" value="1"/>
</dbReference>
<dbReference type="Pfam" id="PF00026">
    <property type="entry name" value="Asp"/>
    <property type="match status" value="1"/>
</dbReference>
<dbReference type="Pfam" id="PF05184">
    <property type="entry name" value="SapB_1"/>
    <property type="match status" value="1"/>
</dbReference>
<dbReference type="Pfam" id="PF03489">
    <property type="entry name" value="SapB_2"/>
    <property type="match status" value="1"/>
</dbReference>
<dbReference type="PRINTS" id="PR00792">
    <property type="entry name" value="PEPSIN"/>
</dbReference>
<dbReference type="SMART" id="SM00741">
    <property type="entry name" value="SapB"/>
    <property type="match status" value="1"/>
</dbReference>
<dbReference type="SUPFAM" id="SSF50630">
    <property type="entry name" value="Acid proteases"/>
    <property type="match status" value="1"/>
</dbReference>
<dbReference type="SUPFAM" id="SSF47862">
    <property type="entry name" value="Saposin"/>
    <property type="match status" value="1"/>
</dbReference>
<dbReference type="PROSITE" id="PS00141">
    <property type="entry name" value="ASP_PROTEASE"/>
    <property type="match status" value="2"/>
</dbReference>
<dbReference type="PROSITE" id="PS51767">
    <property type="entry name" value="PEPTIDASE_A1"/>
    <property type="match status" value="1"/>
</dbReference>
<dbReference type="PROSITE" id="PS50015">
    <property type="entry name" value="SAP_B"/>
    <property type="match status" value="2"/>
</dbReference>
<keyword id="KW-0064">Aspartyl protease</keyword>
<keyword id="KW-1015">Disulfide bond</keyword>
<keyword id="KW-0325">Glycoprotein</keyword>
<keyword id="KW-0378">Hydrolase</keyword>
<keyword id="KW-0645">Protease</keyword>
<keyword id="KW-1185">Reference proteome</keyword>
<keyword id="KW-0732">Signal</keyword>
<keyword id="KW-0926">Vacuole</keyword>
<keyword id="KW-0865">Zymogen</keyword>
<feature type="signal peptide" evidence="2">
    <location>
        <begin position="1"/>
        <end position="24"/>
    </location>
</feature>
<feature type="propeptide" id="PRO_0000025908" description="Activation peptide" evidence="2">
    <location>
        <begin position="25"/>
        <end position="67"/>
    </location>
</feature>
<feature type="chain" id="PRO_0000025909" description="Aspartic proteinase oryzasin-1">
    <location>
        <begin position="68"/>
        <end position="509"/>
    </location>
</feature>
<feature type="domain" description="Peptidase A1" evidence="4">
    <location>
        <begin position="85"/>
        <end position="506"/>
    </location>
</feature>
<feature type="domain" description="Saposin B-type" evidence="3">
    <location>
        <begin position="315"/>
        <end position="420"/>
    </location>
</feature>
<feature type="active site" evidence="5">
    <location>
        <position position="103"/>
    </location>
</feature>
<feature type="active site" evidence="5">
    <location>
        <position position="290"/>
    </location>
</feature>
<feature type="glycosylation site" description="N-linked (GlcNAc...) asparagine" evidence="3">
    <location>
        <position position="252"/>
    </location>
</feature>
<feature type="glycosylation site" description="N-linked (GlcNAc...) asparagine" evidence="3">
    <location>
        <position position="400"/>
    </location>
</feature>
<feature type="disulfide bond" evidence="3">
    <location>
        <begin position="116"/>
        <end position="122"/>
    </location>
</feature>
<feature type="disulfide bond" evidence="3">
    <location>
        <begin position="281"/>
        <end position="285"/>
    </location>
</feature>
<feature type="disulfide bond" evidence="3">
    <location>
        <begin position="320"/>
        <end position="414"/>
    </location>
</feature>
<feature type="disulfide bond" evidence="3">
    <location>
        <begin position="345"/>
        <end position="386"/>
    </location>
</feature>
<feature type="disulfide bond" evidence="3">
    <location>
        <begin position="351"/>
        <end position="383"/>
    </location>
</feature>
<feature type="disulfide bond" evidence="3">
    <location>
        <begin position="428"/>
        <end position="465"/>
    </location>
</feature>
<feature type="sequence conflict" description="In Ref. 1; BAA06875/BAA06876." evidence="6" ref="1">
    <original>A</original>
    <variation>E</variation>
    <location>
        <position position="25"/>
    </location>
</feature>
<feature type="sequence conflict" description="In Ref. 1; BAA06875/BAA06876." evidence="6" ref="1">
    <original>G</original>
    <variation>A</variation>
    <location>
        <position position="443"/>
    </location>
</feature>
<accession>Q42456</accession>
<accession>Q688W6</accession>
<proteinExistence type="evidence at transcript level"/>
<reference key="1">
    <citation type="journal article" date="1995" name="Eur. J. Biochem.">
        <title>Rice aspartic proteinase, oryzasin, expressed during seed ripening and germination, has a gene organization distinct from those of animal and microbial aspartic proteinases.</title>
        <authorList>
            <person name="Asakura T."/>
            <person name="Watanabe H."/>
            <person name="Abe K."/>
            <person name="Arai S."/>
        </authorList>
    </citation>
    <scope>NUCLEOTIDE SEQUENCE [GENOMIC DNA / MRNA]</scope>
    <source>
        <strain>cv. Nipponbare</strain>
        <tissue>Seed</tissue>
    </source>
</reference>
<reference key="2">
    <citation type="journal article" date="2005" name="Mol. Genet. Genomics">
        <title>A fine physical map of the rice chromosome 5.</title>
        <authorList>
            <person name="Cheng C.-H."/>
            <person name="Chung M.C."/>
            <person name="Liu S.-M."/>
            <person name="Chen S.-K."/>
            <person name="Kao F.Y."/>
            <person name="Lin S.-J."/>
            <person name="Hsiao S.-H."/>
            <person name="Tseng I.C."/>
            <person name="Hsing Y.-I.C."/>
            <person name="Wu H.-P."/>
            <person name="Chen C.-S."/>
            <person name="Shaw J.-F."/>
            <person name="Wu J."/>
            <person name="Matsumoto T."/>
            <person name="Sasaki T."/>
            <person name="Chen H.-C."/>
            <person name="Chow T.-Y."/>
        </authorList>
    </citation>
    <scope>NUCLEOTIDE SEQUENCE [LARGE SCALE GENOMIC DNA]</scope>
    <source>
        <strain>cv. Nipponbare</strain>
    </source>
</reference>
<reference key="3">
    <citation type="journal article" date="2005" name="Nature">
        <title>The map-based sequence of the rice genome.</title>
        <authorList>
            <consortium name="International rice genome sequencing project (IRGSP)"/>
        </authorList>
    </citation>
    <scope>NUCLEOTIDE SEQUENCE [LARGE SCALE GENOMIC DNA]</scope>
    <source>
        <strain>cv. Nipponbare</strain>
    </source>
</reference>
<reference key="4">
    <citation type="journal article" date="2013" name="Rice">
        <title>Improvement of the Oryza sativa Nipponbare reference genome using next generation sequence and optical map data.</title>
        <authorList>
            <person name="Kawahara Y."/>
            <person name="de la Bastide M."/>
            <person name="Hamilton J.P."/>
            <person name="Kanamori H."/>
            <person name="McCombie W.R."/>
            <person name="Ouyang S."/>
            <person name="Schwartz D.C."/>
            <person name="Tanaka T."/>
            <person name="Wu J."/>
            <person name="Zhou S."/>
            <person name="Childs K.L."/>
            <person name="Davidson R.M."/>
            <person name="Lin H."/>
            <person name="Quesada-Ocampo L."/>
            <person name="Vaillancourt B."/>
            <person name="Sakai H."/>
            <person name="Lee S.S."/>
            <person name="Kim J."/>
            <person name="Numa H."/>
            <person name="Itoh T."/>
            <person name="Buell C.R."/>
            <person name="Matsumoto T."/>
        </authorList>
    </citation>
    <scope>GENOME REANNOTATION</scope>
    <source>
        <strain>cv. Nipponbare</strain>
    </source>
</reference>
<gene>
    <name type="ordered locus">Os05g0567100</name>
    <name type="ordered locus">LOC_Os05g49200</name>
    <name type="ORF">OJ1781_H11.11</name>
</gene>
<organism>
    <name type="scientific">Oryza sativa subsp. japonica</name>
    <name type="common">Rice</name>
    <dbReference type="NCBI Taxonomy" id="39947"/>
    <lineage>
        <taxon>Eukaryota</taxon>
        <taxon>Viridiplantae</taxon>
        <taxon>Streptophyta</taxon>
        <taxon>Embryophyta</taxon>
        <taxon>Tracheophyta</taxon>
        <taxon>Spermatophyta</taxon>
        <taxon>Magnoliopsida</taxon>
        <taxon>Liliopsida</taxon>
        <taxon>Poales</taxon>
        <taxon>Poaceae</taxon>
        <taxon>BOP clade</taxon>
        <taxon>Oryzoideae</taxon>
        <taxon>Oryzeae</taxon>
        <taxon>Oryzinae</taxon>
        <taxon>Oryza</taxon>
        <taxon>Oryza sativa</taxon>
    </lineage>
</organism>
<evidence type="ECO:0000250" key="1"/>
<evidence type="ECO:0000255" key="2"/>
<evidence type="ECO:0000255" key="3">
    <source>
        <dbReference type="PROSITE-ProRule" id="PRU00415"/>
    </source>
</evidence>
<evidence type="ECO:0000255" key="4">
    <source>
        <dbReference type="PROSITE-ProRule" id="PRU01103"/>
    </source>
</evidence>
<evidence type="ECO:0000255" key="5">
    <source>
        <dbReference type="PROSITE-ProRule" id="PRU10094"/>
    </source>
</evidence>
<evidence type="ECO:0000305" key="6"/>